<comment type="function">
    <text evidence="1">NDH-1 shuttles electrons from NADH, via FMN and iron-sulfur (Fe-S) centers, to quinones in the respiratory chain. The immediate electron acceptor for the enzyme in this species is believed to be ubiquinone. Couples the redox reaction to proton translocation (for every two electrons transferred, four hydrogen ions are translocated across the cytoplasmic membrane), and thus conserves the redox energy in a proton gradient.</text>
</comment>
<comment type="catalytic activity">
    <reaction evidence="1">
        <text>a quinone + NADH + 5 H(+)(in) = a quinol + NAD(+) + 4 H(+)(out)</text>
        <dbReference type="Rhea" id="RHEA:57888"/>
        <dbReference type="ChEBI" id="CHEBI:15378"/>
        <dbReference type="ChEBI" id="CHEBI:24646"/>
        <dbReference type="ChEBI" id="CHEBI:57540"/>
        <dbReference type="ChEBI" id="CHEBI:57945"/>
        <dbReference type="ChEBI" id="CHEBI:132124"/>
    </reaction>
</comment>
<comment type="subunit">
    <text evidence="1">NDH-1 is composed of 14 different subunits. Subunits NuoA, H, J, K, L, M, N constitute the membrane sector of the complex.</text>
</comment>
<comment type="subcellular location">
    <subcellularLocation>
        <location evidence="1">Cell inner membrane</location>
        <topology evidence="1">Multi-pass membrane protein</topology>
    </subcellularLocation>
</comment>
<comment type="similarity">
    <text evidence="1">Belongs to the complex I subunit 4L family.</text>
</comment>
<name>NUOK1_GEOUR</name>
<proteinExistence type="inferred from homology"/>
<gene>
    <name evidence="1" type="primary">nuoK1</name>
    <name type="ordered locus">Gura_0321</name>
</gene>
<feature type="chain" id="PRO_0000390085" description="NADH-quinone oxidoreductase subunit K 1">
    <location>
        <begin position="1"/>
        <end position="102"/>
    </location>
</feature>
<feature type="transmembrane region" description="Helical" evidence="1">
    <location>
        <begin position="5"/>
        <end position="25"/>
    </location>
</feature>
<feature type="transmembrane region" description="Helical" evidence="1">
    <location>
        <begin position="30"/>
        <end position="50"/>
    </location>
</feature>
<feature type="transmembrane region" description="Helical" evidence="1">
    <location>
        <begin position="62"/>
        <end position="82"/>
    </location>
</feature>
<sequence length="102" mass="11058">MIVPLLHVLILAGILFVLGLTCVLVWRSNIIMMLIGIEIMLNAAMLAFVGGANRWGAADGQVFALMIIAMTSAEVSLALALVVYLHRRKKTVNADEFSDMKG</sequence>
<accession>A5GD03</accession>
<protein>
    <recommendedName>
        <fullName evidence="1">NADH-quinone oxidoreductase subunit K 1</fullName>
        <ecNumber evidence="1">7.1.1.-</ecNumber>
    </recommendedName>
    <alternativeName>
        <fullName evidence="1">NADH dehydrogenase I subunit K 1</fullName>
    </alternativeName>
    <alternativeName>
        <fullName evidence="1">NDH-1 subunit K 1</fullName>
    </alternativeName>
</protein>
<organism>
    <name type="scientific">Geotalea uraniireducens (strain Rf4)</name>
    <name type="common">Geobacter uraniireducens</name>
    <dbReference type="NCBI Taxonomy" id="351605"/>
    <lineage>
        <taxon>Bacteria</taxon>
        <taxon>Pseudomonadati</taxon>
        <taxon>Thermodesulfobacteriota</taxon>
        <taxon>Desulfuromonadia</taxon>
        <taxon>Geobacterales</taxon>
        <taxon>Geobacteraceae</taxon>
        <taxon>Geotalea</taxon>
    </lineage>
</organism>
<reference key="1">
    <citation type="submission" date="2007-05" db="EMBL/GenBank/DDBJ databases">
        <title>Complete sequence of Geobacter uraniireducens Rf4.</title>
        <authorList>
            <consortium name="US DOE Joint Genome Institute"/>
            <person name="Copeland A."/>
            <person name="Lucas S."/>
            <person name="Lapidus A."/>
            <person name="Barry K."/>
            <person name="Detter J.C."/>
            <person name="Glavina del Rio T."/>
            <person name="Hammon N."/>
            <person name="Israni S."/>
            <person name="Dalin E."/>
            <person name="Tice H."/>
            <person name="Pitluck S."/>
            <person name="Chertkov O."/>
            <person name="Brettin T."/>
            <person name="Bruce D."/>
            <person name="Han C."/>
            <person name="Schmutz J."/>
            <person name="Larimer F."/>
            <person name="Land M."/>
            <person name="Hauser L."/>
            <person name="Kyrpides N."/>
            <person name="Mikhailova N."/>
            <person name="Shelobolina E."/>
            <person name="Aklujkar M."/>
            <person name="Lovley D."/>
            <person name="Richardson P."/>
        </authorList>
    </citation>
    <scope>NUCLEOTIDE SEQUENCE [LARGE SCALE GENOMIC DNA]</scope>
    <source>
        <strain>ATCC BAA-1134 / JCM 13001 / Rf4</strain>
    </source>
</reference>
<evidence type="ECO:0000255" key="1">
    <source>
        <dbReference type="HAMAP-Rule" id="MF_01456"/>
    </source>
</evidence>
<keyword id="KW-0997">Cell inner membrane</keyword>
<keyword id="KW-1003">Cell membrane</keyword>
<keyword id="KW-0472">Membrane</keyword>
<keyword id="KW-0520">NAD</keyword>
<keyword id="KW-0874">Quinone</keyword>
<keyword id="KW-1185">Reference proteome</keyword>
<keyword id="KW-1278">Translocase</keyword>
<keyword id="KW-0812">Transmembrane</keyword>
<keyword id="KW-1133">Transmembrane helix</keyword>
<keyword id="KW-0813">Transport</keyword>
<keyword id="KW-0830">Ubiquinone</keyword>
<dbReference type="EC" id="7.1.1.-" evidence="1"/>
<dbReference type="EMBL" id="CP000698">
    <property type="protein sequence ID" value="ABQ24537.1"/>
    <property type="molecule type" value="Genomic_DNA"/>
</dbReference>
<dbReference type="RefSeq" id="WP_011937263.1">
    <property type="nucleotide sequence ID" value="NC_009483.1"/>
</dbReference>
<dbReference type="SMR" id="A5GD03"/>
<dbReference type="STRING" id="351605.Gura_0321"/>
<dbReference type="KEGG" id="gur:Gura_0321"/>
<dbReference type="HOGENOM" id="CLU_144724_0_1_7"/>
<dbReference type="OrthoDB" id="9810120at2"/>
<dbReference type="Proteomes" id="UP000006695">
    <property type="component" value="Chromosome"/>
</dbReference>
<dbReference type="GO" id="GO:0030964">
    <property type="term" value="C:NADH dehydrogenase complex"/>
    <property type="evidence" value="ECO:0007669"/>
    <property type="project" value="TreeGrafter"/>
</dbReference>
<dbReference type="GO" id="GO:0005886">
    <property type="term" value="C:plasma membrane"/>
    <property type="evidence" value="ECO:0007669"/>
    <property type="project" value="UniProtKB-SubCell"/>
</dbReference>
<dbReference type="GO" id="GO:0050136">
    <property type="term" value="F:NADH:ubiquinone reductase (non-electrogenic) activity"/>
    <property type="evidence" value="ECO:0007669"/>
    <property type="project" value="UniProtKB-UniRule"/>
</dbReference>
<dbReference type="GO" id="GO:0048038">
    <property type="term" value="F:quinone binding"/>
    <property type="evidence" value="ECO:0007669"/>
    <property type="project" value="UniProtKB-KW"/>
</dbReference>
<dbReference type="GO" id="GO:0042773">
    <property type="term" value="P:ATP synthesis coupled electron transport"/>
    <property type="evidence" value="ECO:0007669"/>
    <property type="project" value="InterPro"/>
</dbReference>
<dbReference type="FunFam" id="1.10.287.3510:FF:000001">
    <property type="entry name" value="NADH-quinone oxidoreductase subunit K"/>
    <property type="match status" value="1"/>
</dbReference>
<dbReference type="Gene3D" id="1.10.287.3510">
    <property type="match status" value="1"/>
</dbReference>
<dbReference type="HAMAP" id="MF_01456">
    <property type="entry name" value="NDH1_NuoK"/>
    <property type="match status" value="1"/>
</dbReference>
<dbReference type="InterPro" id="IPR001133">
    <property type="entry name" value="NADH_UbQ_OxRdtase_chain4L/K"/>
</dbReference>
<dbReference type="InterPro" id="IPR039428">
    <property type="entry name" value="NUOK/Mnh_C1-like"/>
</dbReference>
<dbReference type="NCBIfam" id="NF004319">
    <property type="entry name" value="PRK05715.1-1"/>
    <property type="match status" value="1"/>
</dbReference>
<dbReference type="NCBIfam" id="NF004320">
    <property type="entry name" value="PRK05715.1-2"/>
    <property type="match status" value="1"/>
</dbReference>
<dbReference type="PANTHER" id="PTHR11434:SF16">
    <property type="entry name" value="NADH-UBIQUINONE OXIDOREDUCTASE CHAIN 4L"/>
    <property type="match status" value="1"/>
</dbReference>
<dbReference type="PANTHER" id="PTHR11434">
    <property type="entry name" value="NADH-UBIQUINONE OXIDOREDUCTASE SUBUNIT ND4L"/>
    <property type="match status" value="1"/>
</dbReference>
<dbReference type="Pfam" id="PF00420">
    <property type="entry name" value="Oxidored_q2"/>
    <property type="match status" value="1"/>
</dbReference>